<accession>Q9ZCT7</accession>
<accession>Q9S303</accession>
<comment type="function">
    <text evidence="1">Together with its co-chaperonin GroES, plays an essential role in assisting protein folding. The GroEL-GroES system forms a nano-cage that allows encapsulation of the non-native substrate proteins and provides a physical environment optimized to promote and accelerate protein folding.</text>
</comment>
<comment type="catalytic activity">
    <reaction evidence="1">
        <text>ATP + H2O + a folded polypeptide = ADP + phosphate + an unfolded polypeptide.</text>
        <dbReference type="EC" id="5.6.1.7"/>
    </reaction>
</comment>
<comment type="subunit">
    <text evidence="1">Forms a cylinder of 14 subunits composed of two heptameric rings stacked back-to-back. Interacts with the co-chaperonin GroES.</text>
</comment>
<comment type="subcellular location">
    <subcellularLocation>
        <location evidence="1">Cytoplasm</location>
    </subcellularLocation>
</comment>
<comment type="similarity">
    <text evidence="1">Belongs to the chaperonin (HSP60) family.</text>
</comment>
<keyword id="KW-0067">ATP-binding</keyword>
<keyword id="KW-0143">Chaperone</keyword>
<keyword id="KW-0963">Cytoplasm</keyword>
<keyword id="KW-0413">Isomerase</keyword>
<keyword id="KW-0547">Nucleotide-binding</keyword>
<keyword id="KW-1185">Reference proteome</keyword>
<gene>
    <name evidence="1" type="primary">groEL</name>
    <name evidence="1" type="synonym">groL</name>
    <name type="synonym">mopA</name>
    <name type="ordered locus">RP626</name>
</gene>
<dbReference type="EC" id="5.6.1.7" evidence="1"/>
<dbReference type="EMBL" id="AJ235272">
    <property type="protein sequence ID" value="CAA15067.1"/>
    <property type="molecule type" value="Genomic_DNA"/>
</dbReference>
<dbReference type="EMBL" id="Y15783">
    <property type="protein sequence ID" value="CAB40143.1"/>
    <property type="molecule type" value="Genomic_DNA"/>
</dbReference>
<dbReference type="PIR" id="A71668">
    <property type="entry name" value="A71668"/>
</dbReference>
<dbReference type="RefSeq" id="NP_220991.1">
    <property type="nucleotide sequence ID" value="NC_000963.1"/>
</dbReference>
<dbReference type="RefSeq" id="WP_004596265.1">
    <property type="nucleotide sequence ID" value="NC_000963.1"/>
</dbReference>
<dbReference type="SMR" id="Q9ZCT7"/>
<dbReference type="STRING" id="272947.gene:17555703"/>
<dbReference type="EnsemblBacteria" id="CAA15067">
    <property type="protein sequence ID" value="CAA15067"/>
    <property type="gene ID" value="CAA15067"/>
</dbReference>
<dbReference type="GeneID" id="57569751"/>
<dbReference type="KEGG" id="rpr:RP626"/>
<dbReference type="PATRIC" id="fig|272947.5.peg.647"/>
<dbReference type="eggNOG" id="COG0459">
    <property type="taxonomic scope" value="Bacteria"/>
</dbReference>
<dbReference type="HOGENOM" id="CLU_016503_3_0_5"/>
<dbReference type="OrthoDB" id="9766614at2"/>
<dbReference type="Proteomes" id="UP000002480">
    <property type="component" value="Chromosome"/>
</dbReference>
<dbReference type="GO" id="GO:0005737">
    <property type="term" value="C:cytoplasm"/>
    <property type="evidence" value="ECO:0007669"/>
    <property type="project" value="UniProtKB-SubCell"/>
</dbReference>
<dbReference type="GO" id="GO:0005524">
    <property type="term" value="F:ATP binding"/>
    <property type="evidence" value="ECO:0007669"/>
    <property type="project" value="UniProtKB-UniRule"/>
</dbReference>
<dbReference type="GO" id="GO:0140662">
    <property type="term" value="F:ATP-dependent protein folding chaperone"/>
    <property type="evidence" value="ECO:0007669"/>
    <property type="project" value="InterPro"/>
</dbReference>
<dbReference type="GO" id="GO:0016853">
    <property type="term" value="F:isomerase activity"/>
    <property type="evidence" value="ECO:0007669"/>
    <property type="project" value="UniProtKB-KW"/>
</dbReference>
<dbReference type="GO" id="GO:0051082">
    <property type="term" value="F:unfolded protein binding"/>
    <property type="evidence" value="ECO:0007669"/>
    <property type="project" value="UniProtKB-UniRule"/>
</dbReference>
<dbReference type="GO" id="GO:0042026">
    <property type="term" value="P:protein refolding"/>
    <property type="evidence" value="ECO:0007669"/>
    <property type="project" value="UniProtKB-UniRule"/>
</dbReference>
<dbReference type="CDD" id="cd03344">
    <property type="entry name" value="GroEL"/>
    <property type="match status" value="1"/>
</dbReference>
<dbReference type="FunFam" id="3.50.7.10:FF:000001">
    <property type="entry name" value="60 kDa chaperonin"/>
    <property type="match status" value="1"/>
</dbReference>
<dbReference type="Gene3D" id="3.50.7.10">
    <property type="entry name" value="GroEL"/>
    <property type="match status" value="1"/>
</dbReference>
<dbReference type="Gene3D" id="1.10.560.10">
    <property type="entry name" value="GroEL-like equatorial domain"/>
    <property type="match status" value="1"/>
</dbReference>
<dbReference type="Gene3D" id="3.30.260.10">
    <property type="entry name" value="TCP-1-like chaperonin intermediate domain"/>
    <property type="match status" value="1"/>
</dbReference>
<dbReference type="HAMAP" id="MF_00600">
    <property type="entry name" value="CH60"/>
    <property type="match status" value="1"/>
</dbReference>
<dbReference type="InterPro" id="IPR018370">
    <property type="entry name" value="Chaperonin_Cpn60_CS"/>
</dbReference>
<dbReference type="InterPro" id="IPR001844">
    <property type="entry name" value="Cpn60/GroEL"/>
</dbReference>
<dbReference type="InterPro" id="IPR002423">
    <property type="entry name" value="Cpn60/GroEL/TCP-1"/>
</dbReference>
<dbReference type="InterPro" id="IPR027409">
    <property type="entry name" value="GroEL-like_apical_dom_sf"/>
</dbReference>
<dbReference type="InterPro" id="IPR027413">
    <property type="entry name" value="GROEL-like_equatorial_sf"/>
</dbReference>
<dbReference type="InterPro" id="IPR027410">
    <property type="entry name" value="TCP-1-like_intermed_sf"/>
</dbReference>
<dbReference type="NCBIfam" id="TIGR02348">
    <property type="entry name" value="GroEL"/>
    <property type="match status" value="1"/>
</dbReference>
<dbReference type="NCBIfam" id="NF000592">
    <property type="entry name" value="PRK00013.1"/>
    <property type="match status" value="1"/>
</dbReference>
<dbReference type="NCBIfam" id="NF009487">
    <property type="entry name" value="PRK12849.1"/>
    <property type="match status" value="1"/>
</dbReference>
<dbReference type="NCBIfam" id="NF009488">
    <property type="entry name" value="PRK12850.1"/>
    <property type="match status" value="1"/>
</dbReference>
<dbReference type="NCBIfam" id="NF009489">
    <property type="entry name" value="PRK12851.1"/>
    <property type="match status" value="1"/>
</dbReference>
<dbReference type="PANTHER" id="PTHR45633">
    <property type="entry name" value="60 KDA HEAT SHOCK PROTEIN, MITOCHONDRIAL"/>
    <property type="match status" value="1"/>
</dbReference>
<dbReference type="Pfam" id="PF00118">
    <property type="entry name" value="Cpn60_TCP1"/>
    <property type="match status" value="1"/>
</dbReference>
<dbReference type="PRINTS" id="PR00298">
    <property type="entry name" value="CHAPERONIN60"/>
</dbReference>
<dbReference type="SUPFAM" id="SSF52029">
    <property type="entry name" value="GroEL apical domain-like"/>
    <property type="match status" value="1"/>
</dbReference>
<dbReference type="SUPFAM" id="SSF48592">
    <property type="entry name" value="GroEL equatorial domain-like"/>
    <property type="match status" value="1"/>
</dbReference>
<dbReference type="SUPFAM" id="SSF54849">
    <property type="entry name" value="GroEL-intermediate domain like"/>
    <property type="match status" value="1"/>
</dbReference>
<dbReference type="PROSITE" id="PS00296">
    <property type="entry name" value="CHAPERONINS_CPN60"/>
    <property type="match status" value="1"/>
</dbReference>
<sequence>MTTKLIKHGSKAREQMLEGIDILADAVKVTLGPKGRNVLIEQSFGAPKITKDGVTVAKSIELKDKIKNAGAQLLKSAATKAAEVAGDGTTTATVLARALAREGNKLVAAGYNPMDLKRGMDLAVNAVVEEIKRSSKKINSQEEIAQVGTISSNGDKEIGEKIAKAMEEVGKEGVITVEEAKNFSFDVEVVKGMMFDRGYLSPYFVTNSEKMVAELENPFILLFEKKLSNLQPMLPILEAVVQSQRPLLIIAEDVEGEALATLVVNRLRGGLKVAAVKAPGFGDRRKAMMEDIAILTKGELITEDLGMKLENVNIKNLGTAKRVTISKENTVIVDGNGDKKNIEDRVLQIKSQIAETTSDYDKEKLQERLAKLSGGVAVLKVGGATEVEVKERKDRVEDALAATRAAVEEGVVAGGGVTLLHASQTLTKLKVENKDQQAGIEIVIEALKDPLKQIVKNAGENGGVVVGKLLEHNDKNYGFNAQDMQYVDMIKAGIIDPAKVVRTALQDAASVASLIITTETLIVDEPSDKEEPMPMRGGMGGMGGMGGMDF</sequence>
<feature type="chain" id="PRO_0000063516" description="Chaperonin GroEL">
    <location>
        <begin position="1"/>
        <end position="550"/>
    </location>
</feature>
<feature type="binding site" evidence="1">
    <location>
        <begin position="30"/>
        <end position="33"/>
    </location>
    <ligand>
        <name>ATP</name>
        <dbReference type="ChEBI" id="CHEBI:30616"/>
    </ligand>
</feature>
<feature type="binding site" evidence="1">
    <location>
        <position position="51"/>
    </location>
    <ligand>
        <name>ATP</name>
        <dbReference type="ChEBI" id="CHEBI:30616"/>
    </ligand>
</feature>
<feature type="binding site" evidence="1">
    <location>
        <begin position="87"/>
        <end position="91"/>
    </location>
    <ligand>
        <name>ATP</name>
        <dbReference type="ChEBI" id="CHEBI:30616"/>
    </ligand>
</feature>
<feature type="binding site" evidence="1">
    <location>
        <position position="415"/>
    </location>
    <ligand>
        <name>ATP</name>
        <dbReference type="ChEBI" id="CHEBI:30616"/>
    </ligand>
</feature>
<feature type="binding site" evidence="1">
    <location>
        <position position="496"/>
    </location>
    <ligand>
        <name>ATP</name>
        <dbReference type="ChEBI" id="CHEBI:30616"/>
    </ligand>
</feature>
<feature type="sequence variant" description="In strain: Breinl.">
    <original>GS</original>
    <variation>VQ</variation>
    <location>
        <begin position="9"/>
        <end position="10"/>
    </location>
</feature>
<feature type="sequence variant" description="In strain: Breinl.">
    <original>E</original>
    <variation>Q</variation>
    <location>
        <position position="432"/>
    </location>
</feature>
<proteinExistence type="inferred from homology"/>
<name>CH60_RICPR</name>
<organism>
    <name type="scientific">Rickettsia prowazekii (strain Madrid E)</name>
    <dbReference type="NCBI Taxonomy" id="272947"/>
    <lineage>
        <taxon>Bacteria</taxon>
        <taxon>Pseudomonadati</taxon>
        <taxon>Pseudomonadota</taxon>
        <taxon>Alphaproteobacteria</taxon>
        <taxon>Rickettsiales</taxon>
        <taxon>Rickettsiaceae</taxon>
        <taxon>Rickettsieae</taxon>
        <taxon>Rickettsia</taxon>
        <taxon>typhus group</taxon>
    </lineage>
</organism>
<protein>
    <recommendedName>
        <fullName evidence="1">Chaperonin GroEL</fullName>
        <ecNumber evidence="1">5.6.1.7</ecNumber>
    </recommendedName>
    <alternativeName>
        <fullName evidence="1">60 kDa chaperonin</fullName>
    </alternativeName>
    <alternativeName>
        <fullName evidence="1">Chaperonin-60</fullName>
        <shortName evidence="1">Cpn60</shortName>
    </alternativeName>
</protein>
<evidence type="ECO:0000255" key="1">
    <source>
        <dbReference type="HAMAP-Rule" id="MF_00600"/>
    </source>
</evidence>
<reference key="1">
    <citation type="journal article" date="1998" name="Nature">
        <title>The genome sequence of Rickettsia prowazekii and the origin of mitochondria.</title>
        <authorList>
            <person name="Andersson S.G.E."/>
            <person name="Zomorodipour A."/>
            <person name="Andersson J.O."/>
            <person name="Sicheritz-Ponten T."/>
            <person name="Alsmark U.C.M."/>
            <person name="Podowski R.M."/>
            <person name="Naeslund A.K."/>
            <person name="Eriksson A.-S."/>
            <person name="Winkler H.H."/>
            <person name="Kurland C.G."/>
        </authorList>
    </citation>
    <scope>NUCLEOTIDE SEQUENCE [LARGE SCALE GENOMIC DNA]</scope>
    <source>
        <strain>Madrid E</strain>
    </source>
</reference>
<reference key="2">
    <citation type="journal article" date="1999" name="Russ. J. Genet.">
        <title>A groE-based phylogenetic analysis shows very close evolutionary relationship between mitochondria and rickettsia.</title>
        <authorList>
            <person name="Emelyanov V.V."/>
            <person name="Sinitsyn B.V."/>
        </authorList>
    </citation>
    <scope>NUCLEOTIDE SEQUENCE [GENOMIC DNA]</scope>
    <source>
        <strain>ATCC VR-142 / Breinl</strain>
    </source>
</reference>